<organism>
    <name type="scientific">Arabidopsis thaliana</name>
    <name type="common">Mouse-ear cress</name>
    <dbReference type="NCBI Taxonomy" id="3702"/>
    <lineage>
        <taxon>Eukaryota</taxon>
        <taxon>Viridiplantae</taxon>
        <taxon>Streptophyta</taxon>
        <taxon>Embryophyta</taxon>
        <taxon>Tracheophyta</taxon>
        <taxon>Spermatophyta</taxon>
        <taxon>Magnoliopsida</taxon>
        <taxon>eudicotyledons</taxon>
        <taxon>Gunneridae</taxon>
        <taxon>Pentapetalae</taxon>
        <taxon>rosids</taxon>
        <taxon>malvids</taxon>
        <taxon>Brassicales</taxon>
        <taxon>Brassicaceae</taxon>
        <taxon>Camelineae</taxon>
        <taxon>Arabidopsis</taxon>
    </lineage>
</organism>
<keyword id="KW-0539">Nucleus</keyword>
<keyword id="KW-1185">Reference proteome</keyword>
<keyword id="KW-0677">Repeat</keyword>
<keyword id="KW-0687">Ribonucleoprotein</keyword>
<keyword id="KW-0690">Ribosome biogenesis</keyword>
<keyword id="KW-0694">RNA-binding</keyword>
<keyword id="KW-0698">rRNA processing</keyword>
<comment type="function">
    <text evidence="1">Required for ribosome biogenesis. Part of a complex which catalyzes pseudouridylation of rRNA. This involves the isomerization of uridine such that the ribose is subsequently attached to C5, instead of the normal N1. Pseudouridine ('psi') residues may serve to stabilize the conformation of rRNAs (By similarity).</text>
</comment>
<comment type="subunit">
    <text evidence="1">Component of the small nucleolar ribonucleoprotein particle containing H/ACA-type snoRNAs (H/ACA snoRNPs).</text>
</comment>
<comment type="subcellular location">
    <subcellularLocation>
        <location evidence="1">Nucleus</location>
        <location evidence="1">Nucleolus</location>
    </subcellularLocation>
</comment>
<comment type="similarity">
    <text evidence="3">Belongs to the GAR1 family.</text>
</comment>
<feature type="chain" id="PRO_0000208561" description="H/ACA ribonucleoprotein complex subunit 1-like protein 2">
    <location>
        <begin position="1"/>
        <end position="189"/>
    </location>
</feature>
<feature type="region of interest" description="Disordered" evidence="2">
    <location>
        <begin position="1"/>
        <end position="39"/>
    </location>
</feature>
<feature type="region of interest" description="Disordered" evidence="2">
    <location>
        <begin position="129"/>
        <end position="189"/>
    </location>
</feature>
<feature type="compositionally biased region" description="Gly residues" evidence="2">
    <location>
        <begin position="1"/>
        <end position="12"/>
    </location>
</feature>
<feature type="compositionally biased region" description="Low complexity" evidence="2">
    <location>
        <begin position="162"/>
        <end position="177"/>
    </location>
</feature>
<protein>
    <recommendedName>
        <fullName>H/ACA ribonucleoprotein complex subunit 1-like protein 2</fullName>
    </recommendedName>
</protein>
<name>NLAL2_ARATH</name>
<accession>Q9FK53</accession>
<reference key="1">
    <citation type="journal article" date="1998" name="DNA Res.">
        <title>Structural analysis of Arabidopsis thaliana chromosome 5. VI. Sequence features of the regions of 1,367,185 bp covered by 19 physically assigned P1 and TAC clones.</title>
        <authorList>
            <person name="Kotani H."/>
            <person name="Nakamura Y."/>
            <person name="Sato S."/>
            <person name="Asamizu E."/>
            <person name="Kaneko T."/>
            <person name="Miyajima N."/>
            <person name="Tabata S."/>
        </authorList>
    </citation>
    <scope>NUCLEOTIDE SEQUENCE [LARGE SCALE GENOMIC DNA]</scope>
    <source>
        <strain>cv. Columbia</strain>
    </source>
</reference>
<reference key="2">
    <citation type="journal article" date="2017" name="Plant J.">
        <title>Araport11: a complete reannotation of the Arabidopsis thaliana reference genome.</title>
        <authorList>
            <person name="Cheng C.Y."/>
            <person name="Krishnakumar V."/>
            <person name="Chan A.P."/>
            <person name="Thibaud-Nissen F."/>
            <person name="Schobel S."/>
            <person name="Town C.D."/>
        </authorList>
    </citation>
    <scope>GENOME REANNOTATION</scope>
    <source>
        <strain>cv. Columbia</strain>
    </source>
</reference>
<gene>
    <name type="ordered locus">At5g18180</name>
    <name type="ORF">MRG7.14</name>
</gene>
<proteinExistence type="evidence at transcript level"/>
<sequence>MRPPRGGGSFRGRGGRDNGGRGRGRGRGRGRFGGGNYDEGPPSEVVEVATFLHACEGDAVFKLSNVKIPHFNAPIYLQNKTQIGRVDEIFGPINESLFSIKMREGIVATSYSQGDKFFISPEKLLPLSRFLPQPKGQSGGRGEGRVPPRGRGPPRGRGNFRGRGAPRGASRGFQPRGGPRGGFRGRGRA</sequence>
<dbReference type="EMBL" id="AB012246">
    <property type="protein sequence ID" value="BAB09476.1"/>
    <property type="molecule type" value="Genomic_DNA"/>
</dbReference>
<dbReference type="EMBL" id="CP002688">
    <property type="protein sequence ID" value="AED92516.1"/>
    <property type="molecule type" value="Genomic_DNA"/>
</dbReference>
<dbReference type="RefSeq" id="NP_197319.1">
    <property type="nucleotide sequence ID" value="NM_121823.2"/>
</dbReference>
<dbReference type="SMR" id="Q9FK53"/>
<dbReference type="BioGRID" id="17212">
    <property type="interactions" value="2"/>
</dbReference>
<dbReference type="FunCoup" id="Q9FK53">
    <property type="interactions" value="2725"/>
</dbReference>
<dbReference type="STRING" id="3702.Q9FK53"/>
<dbReference type="PaxDb" id="3702-AT5G18180.1"/>
<dbReference type="ProteomicsDB" id="251062"/>
<dbReference type="EnsemblPlants" id="AT5G18180.1">
    <property type="protein sequence ID" value="AT5G18180.1"/>
    <property type="gene ID" value="AT5G18180"/>
</dbReference>
<dbReference type="GeneID" id="831936"/>
<dbReference type="Gramene" id="AT5G18180.1">
    <property type="protein sequence ID" value="AT5G18180.1"/>
    <property type="gene ID" value="AT5G18180"/>
</dbReference>
<dbReference type="KEGG" id="ath:AT5G18180"/>
<dbReference type="Araport" id="AT5G18180"/>
<dbReference type="TAIR" id="AT5G18180"/>
<dbReference type="eggNOG" id="KOG3262">
    <property type="taxonomic scope" value="Eukaryota"/>
</dbReference>
<dbReference type="HOGENOM" id="CLU_080002_0_0_1"/>
<dbReference type="InParanoid" id="Q9FK53"/>
<dbReference type="OMA" id="KDHGSAF"/>
<dbReference type="PhylomeDB" id="Q9FK53"/>
<dbReference type="PRO" id="PR:Q9FK53"/>
<dbReference type="Proteomes" id="UP000006548">
    <property type="component" value="Chromosome 5"/>
</dbReference>
<dbReference type="ExpressionAtlas" id="Q9FK53">
    <property type="expression patterns" value="baseline and differential"/>
</dbReference>
<dbReference type="GO" id="GO:0009535">
    <property type="term" value="C:chloroplast thylakoid membrane"/>
    <property type="evidence" value="ECO:0007005"/>
    <property type="project" value="TAIR"/>
</dbReference>
<dbReference type="GO" id="GO:0005730">
    <property type="term" value="C:nucleolus"/>
    <property type="evidence" value="ECO:0007669"/>
    <property type="project" value="UniProtKB-SubCell"/>
</dbReference>
<dbReference type="GO" id="GO:1990904">
    <property type="term" value="C:ribonucleoprotein complex"/>
    <property type="evidence" value="ECO:0007669"/>
    <property type="project" value="UniProtKB-KW"/>
</dbReference>
<dbReference type="GO" id="GO:0003723">
    <property type="term" value="F:RNA binding"/>
    <property type="evidence" value="ECO:0007669"/>
    <property type="project" value="UniProtKB-KW"/>
</dbReference>
<dbReference type="GO" id="GO:0001522">
    <property type="term" value="P:pseudouridine synthesis"/>
    <property type="evidence" value="ECO:0007669"/>
    <property type="project" value="InterPro"/>
</dbReference>
<dbReference type="GO" id="GO:0006364">
    <property type="term" value="P:rRNA processing"/>
    <property type="evidence" value="ECO:0007669"/>
    <property type="project" value="UniProtKB-KW"/>
</dbReference>
<dbReference type="FunFam" id="2.40.10.230:FF:000001">
    <property type="entry name" value="H/ACA ribonucleoprotein complex subunit"/>
    <property type="match status" value="1"/>
</dbReference>
<dbReference type="Gene3D" id="2.40.10.230">
    <property type="entry name" value="Probable tRNA pseudouridine synthase domain"/>
    <property type="match status" value="1"/>
</dbReference>
<dbReference type="InterPro" id="IPR038664">
    <property type="entry name" value="Gar1/Naf1_Cbf5-bd_sf"/>
</dbReference>
<dbReference type="InterPro" id="IPR007504">
    <property type="entry name" value="H/ACA_rnp_Gar1/Naf1"/>
</dbReference>
<dbReference type="InterPro" id="IPR009000">
    <property type="entry name" value="Transl_B-barrel_sf"/>
</dbReference>
<dbReference type="PANTHER" id="PTHR23237:SF6">
    <property type="entry name" value="H_ACA RIBONUCLEOPROTEIN COMPLEX SUBUNIT 1"/>
    <property type="match status" value="1"/>
</dbReference>
<dbReference type="PANTHER" id="PTHR23237">
    <property type="entry name" value="NUCLEOLAR PROTEIN FAMILY A MEMBER 1 SNORNP PROTEIN GAR1"/>
    <property type="match status" value="1"/>
</dbReference>
<dbReference type="Pfam" id="PF04410">
    <property type="entry name" value="Gar1"/>
    <property type="match status" value="1"/>
</dbReference>
<dbReference type="SUPFAM" id="SSF50447">
    <property type="entry name" value="Translation proteins"/>
    <property type="match status" value="1"/>
</dbReference>
<evidence type="ECO:0000250" key="1"/>
<evidence type="ECO:0000256" key="2">
    <source>
        <dbReference type="SAM" id="MobiDB-lite"/>
    </source>
</evidence>
<evidence type="ECO:0000305" key="3"/>